<gene>
    <name evidence="1" type="primary">aas</name>
    <name type="ordered locus">plu1246</name>
</gene>
<dbReference type="EC" id="2.3.1.40" evidence="1"/>
<dbReference type="EC" id="6.2.1.20" evidence="1"/>
<dbReference type="EMBL" id="BX571863">
    <property type="protein sequence ID" value="CAE13540.1"/>
    <property type="molecule type" value="Genomic_DNA"/>
</dbReference>
<dbReference type="SMR" id="Q7N7A9"/>
<dbReference type="STRING" id="243265.plu1246"/>
<dbReference type="KEGG" id="plu:plu1246"/>
<dbReference type="eggNOG" id="COG0204">
    <property type="taxonomic scope" value="Bacteria"/>
</dbReference>
<dbReference type="eggNOG" id="COG0318">
    <property type="taxonomic scope" value="Bacteria"/>
</dbReference>
<dbReference type="HOGENOM" id="CLU_000022_59_8_6"/>
<dbReference type="OrthoDB" id="9803968at2"/>
<dbReference type="Proteomes" id="UP000002514">
    <property type="component" value="Chromosome"/>
</dbReference>
<dbReference type="GO" id="GO:0005886">
    <property type="term" value="C:plasma membrane"/>
    <property type="evidence" value="ECO:0007669"/>
    <property type="project" value="UniProtKB-SubCell"/>
</dbReference>
<dbReference type="GO" id="GO:0008779">
    <property type="term" value="F:acyl-[acyl-carrier-protein]-phospholipid O-acyltransferase activity"/>
    <property type="evidence" value="ECO:0007669"/>
    <property type="project" value="UniProtKB-UniRule"/>
</dbReference>
<dbReference type="GO" id="GO:0005524">
    <property type="term" value="F:ATP binding"/>
    <property type="evidence" value="ECO:0007669"/>
    <property type="project" value="UniProtKB-KW"/>
</dbReference>
<dbReference type="GO" id="GO:0008922">
    <property type="term" value="F:long-chain fatty acid [acyl-carrier-protein] ligase activity"/>
    <property type="evidence" value="ECO:0007669"/>
    <property type="project" value="UniProtKB-UniRule"/>
</dbReference>
<dbReference type="GO" id="GO:0031956">
    <property type="term" value="F:medium-chain fatty acid-CoA ligase activity"/>
    <property type="evidence" value="ECO:0007669"/>
    <property type="project" value="TreeGrafter"/>
</dbReference>
<dbReference type="GO" id="GO:0006631">
    <property type="term" value="P:fatty acid metabolic process"/>
    <property type="evidence" value="ECO:0007669"/>
    <property type="project" value="InterPro"/>
</dbReference>
<dbReference type="GO" id="GO:0008654">
    <property type="term" value="P:phospholipid biosynthetic process"/>
    <property type="evidence" value="ECO:0007669"/>
    <property type="project" value="InterPro"/>
</dbReference>
<dbReference type="CDD" id="cd07989">
    <property type="entry name" value="LPLAT_AGPAT-like"/>
    <property type="match status" value="1"/>
</dbReference>
<dbReference type="Gene3D" id="3.40.50.12780">
    <property type="entry name" value="N-terminal domain of ligase-like"/>
    <property type="match status" value="1"/>
</dbReference>
<dbReference type="HAMAP" id="MF_01162">
    <property type="entry name" value="Aas"/>
    <property type="match status" value="1"/>
</dbReference>
<dbReference type="InterPro" id="IPR023775">
    <property type="entry name" value="Aas"/>
</dbReference>
<dbReference type="InterPro" id="IPR000873">
    <property type="entry name" value="AMP-dep_synth/lig_dom"/>
</dbReference>
<dbReference type="InterPro" id="IPR042099">
    <property type="entry name" value="ANL_N_sf"/>
</dbReference>
<dbReference type="InterPro" id="IPR002123">
    <property type="entry name" value="Plipid/glycerol_acylTrfase"/>
</dbReference>
<dbReference type="NCBIfam" id="NF005959">
    <property type="entry name" value="PRK08043.1"/>
    <property type="match status" value="1"/>
</dbReference>
<dbReference type="PANTHER" id="PTHR43201">
    <property type="entry name" value="ACYL-COA SYNTHETASE"/>
    <property type="match status" value="1"/>
</dbReference>
<dbReference type="PANTHER" id="PTHR43201:SF5">
    <property type="entry name" value="MEDIUM-CHAIN ACYL-COA LIGASE ACSF2, MITOCHONDRIAL"/>
    <property type="match status" value="1"/>
</dbReference>
<dbReference type="Pfam" id="PF01553">
    <property type="entry name" value="Acyltransferase"/>
    <property type="match status" value="1"/>
</dbReference>
<dbReference type="Pfam" id="PF00501">
    <property type="entry name" value="AMP-binding"/>
    <property type="match status" value="1"/>
</dbReference>
<dbReference type="SMART" id="SM00563">
    <property type="entry name" value="PlsC"/>
    <property type="match status" value="1"/>
</dbReference>
<dbReference type="SUPFAM" id="SSF56801">
    <property type="entry name" value="Acetyl-CoA synthetase-like"/>
    <property type="match status" value="1"/>
</dbReference>
<dbReference type="SUPFAM" id="SSF69593">
    <property type="entry name" value="Glycerol-3-phosphate (1)-acyltransferase"/>
    <property type="match status" value="1"/>
</dbReference>
<comment type="function">
    <text evidence="1">Plays a role in lysophospholipid acylation. Transfers fatty acids to the 1-position via an enzyme-bound acyl-ACP intermediate in the presence of ATP and magnesium. Its physiological function is to regenerate phosphatidylethanolamine from 2-acyl-glycero-3-phosphoethanolamine (2-acyl-GPE) formed by transacylation reactions or degradation by phospholipase A1.</text>
</comment>
<comment type="catalytic activity">
    <reaction evidence="1">
        <text>a 2-acyl-sn-glycero-3-phosphoethanolamine + a fatty acyl-[ACP] = a 1,2-diacyl-sn-glycero-3-phosphoethanolamine + holo-[ACP]</text>
        <dbReference type="Rhea" id="RHEA:10304"/>
        <dbReference type="Rhea" id="RHEA-COMP:9685"/>
        <dbReference type="Rhea" id="RHEA-COMP:14125"/>
        <dbReference type="ChEBI" id="CHEBI:64479"/>
        <dbReference type="ChEBI" id="CHEBI:64612"/>
        <dbReference type="ChEBI" id="CHEBI:65213"/>
        <dbReference type="ChEBI" id="CHEBI:138651"/>
        <dbReference type="EC" id="2.3.1.40"/>
    </reaction>
</comment>
<comment type="catalytic activity">
    <reaction evidence="1">
        <text>a long-chain fatty acid + holo-[ACP] + ATP = a long-chain fatty acyl-[ACP] + AMP + diphosphate</text>
        <dbReference type="Rhea" id="RHEA:45588"/>
        <dbReference type="Rhea" id="RHEA-COMP:9685"/>
        <dbReference type="Rhea" id="RHEA-COMP:12682"/>
        <dbReference type="ChEBI" id="CHEBI:30616"/>
        <dbReference type="ChEBI" id="CHEBI:33019"/>
        <dbReference type="ChEBI" id="CHEBI:57560"/>
        <dbReference type="ChEBI" id="CHEBI:64479"/>
        <dbReference type="ChEBI" id="CHEBI:133243"/>
        <dbReference type="ChEBI" id="CHEBI:456215"/>
        <dbReference type="EC" id="6.2.1.20"/>
    </reaction>
</comment>
<comment type="subcellular location">
    <subcellularLocation>
        <location evidence="1">Cell inner membrane</location>
        <topology evidence="1">Multi-pass membrane protein</topology>
    </subcellularLocation>
</comment>
<comment type="similarity">
    <text evidence="1">In the N-terminal section; belongs to the 2-acyl-GPE acetyltransferase family.</text>
</comment>
<comment type="similarity">
    <text evidence="1">In the C-terminal section; belongs to the ATP-dependent AMP-binding enzyme family.</text>
</comment>
<sequence>MLFKFLRLVFRLMFRLTVEGDIKQFNHPKCLITPNHVSFLDGVLLTLFLPVKPVFAVYSNIANRGFMKLVSRYVEIVPLDPINPMAVRILVKEIEKGRPIVVFPEGRITVTGSLMKIYDGAAFIAAISEAVVVPVRFEGLERTLFSRLKGIFKLHLFPKVTMKILPATQLLMPNASSSEQRRRLAGERLHEIMMNARMATRPQETIFESLLVARKQFGRFKPCIEDVSFKEDSYNSLLKKVLAASRILQRFTCQGERIGFLLPNATIMVAAIFGASLRGRIPALLNYTTDSHGLKNALAVASIKTIVTSRQFLKKERLTHLSEQVTEVNWVYLEDLESTVTLLDKLWILWHLFFPKQAMVAQKPDDDALVLFTSGSDAVSKGVVHSHASLLANVEQIKTITDFNPLDRFMSSLPLFHAFGLTVGLFTPLLSGSRIFLYPNPLHYRVVPELVYECNCTVLLGTSSFLENYAYSAHPYDFARLRCVIAGIEKLAENTKQIWQDKFGIRILEGYGMTECAPVIALNVPMMAKVGTVGRILPAMEFRLIPIAGIKQGGRLQLRGPNMMKGYLRMEDPNHLEPPAVKDEHGNIQFDWLDTGDIVSIDEQGFCTILGRGKRFAKQGELDGGKADFVTLCKIAEAE</sequence>
<feature type="chain" id="PRO_0000193050" description="Bifunctional protein Aas">
    <location>
        <begin position="1"/>
        <end position="639"/>
    </location>
</feature>
<feature type="transmembrane region" description="Helical" evidence="1">
    <location>
        <begin position="258"/>
        <end position="277"/>
    </location>
</feature>
<feature type="transmembrane region" description="Helical" evidence="1">
    <location>
        <begin position="409"/>
        <end position="433"/>
    </location>
</feature>
<feature type="region of interest" description="Acyltransferase">
    <location>
        <begin position="15"/>
        <end position="138"/>
    </location>
</feature>
<feature type="region of interest" description="AMP-binding">
    <location>
        <begin position="233"/>
        <end position="619"/>
    </location>
</feature>
<feature type="active site" evidence="1">
    <location>
        <position position="36"/>
    </location>
</feature>
<evidence type="ECO:0000255" key="1">
    <source>
        <dbReference type="HAMAP-Rule" id="MF_01162"/>
    </source>
</evidence>
<keyword id="KW-0012">Acyltransferase</keyword>
<keyword id="KW-0067">ATP-binding</keyword>
<keyword id="KW-0997">Cell inner membrane</keyword>
<keyword id="KW-1003">Cell membrane</keyword>
<keyword id="KW-0436">Ligase</keyword>
<keyword id="KW-0472">Membrane</keyword>
<keyword id="KW-0511">Multifunctional enzyme</keyword>
<keyword id="KW-0547">Nucleotide-binding</keyword>
<keyword id="KW-1185">Reference proteome</keyword>
<keyword id="KW-0808">Transferase</keyword>
<keyword id="KW-0812">Transmembrane</keyword>
<keyword id="KW-1133">Transmembrane helix</keyword>
<protein>
    <recommendedName>
        <fullName evidence="1">Bifunctional protein Aas</fullName>
    </recommendedName>
    <domain>
        <recommendedName>
            <fullName evidence="1">2-acylglycerophosphoethanolamine acyltransferase</fullName>
            <ecNumber evidence="1">2.3.1.40</ecNumber>
        </recommendedName>
        <alternativeName>
            <fullName evidence="1">2-acyl-GPE acyltransferase</fullName>
        </alternativeName>
        <alternativeName>
            <fullName evidence="1">Acyl-[acyl-carrier-protein]--phospholipid O-acyltransferase</fullName>
        </alternativeName>
    </domain>
    <domain>
        <recommendedName>
            <fullName evidence="1">Acyl-[acyl-carrier-protein] synthetase</fullName>
            <ecNumber evidence="1">6.2.1.20</ecNumber>
        </recommendedName>
        <alternativeName>
            <fullName evidence="1">Acyl-ACP synthetase</fullName>
        </alternativeName>
        <alternativeName>
            <fullName evidence="1">Long-chain-fatty-acid--[acyl-carrier-protein] ligase</fullName>
        </alternativeName>
    </domain>
</protein>
<name>AAS_PHOLL</name>
<organism>
    <name type="scientific">Photorhabdus laumondii subsp. laumondii (strain DSM 15139 / CIP 105565 / TT01)</name>
    <name type="common">Photorhabdus luminescens subsp. laumondii</name>
    <dbReference type="NCBI Taxonomy" id="243265"/>
    <lineage>
        <taxon>Bacteria</taxon>
        <taxon>Pseudomonadati</taxon>
        <taxon>Pseudomonadota</taxon>
        <taxon>Gammaproteobacteria</taxon>
        <taxon>Enterobacterales</taxon>
        <taxon>Morganellaceae</taxon>
        <taxon>Photorhabdus</taxon>
    </lineage>
</organism>
<reference key="1">
    <citation type="journal article" date="2003" name="Nat. Biotechnol.">
        <title>The genome sequence of the entomopathogenic bacterium Photorhabdus luminescens.</title>
        <authorList>
            <person name="Duchaud E."/>
            <person name="Rusniok C."/>
            <person name="Frangeul L."/>
            <person name="Buchrieser C."/>
            <person name="Givaudan A."/>
            <person name="Taourit S."/>
            <person name="Bocs S."/>
            <person name="Boursaux-Eude C."/>
            <person name="Chandler M."/>
            <person name="Charles J.-F."/>
            <person name="Dassa E."/>
            <person name="Derose R."/>
            <person name="Derzelle S."/>
            <person name="Freyssinet G."/>
            <person name="Gaudriault S."/>
            <person name="Medigue C."/>
            <person name="Lanois A."/>
            <person name="Powell K."/>
            <person name="Siguier P."/>
            <person name="Vincent R."/>
            <person name="Wingate V."/>
            <person name="Zouine M."/>
            <person name="Glaser P."/>
            <person name="Boemare N."/>
            <person name="Danchin A."/>
            <person name="Kunst F."/>
        </authorList>
    </citation>
    <scope>NUCLEOTIDE SEQUENCE [LARGE SCALE GENOMIC DNA]</scope>
    <source>
        <strain>DSM 15139 / CIP 105565 / TT01</strain>
    </source>
</reference>
<accession>Q7N7A9</accession>
<proteinExistence type="inferred from homology"/>